<dbReference type="EC" id="3.6.4.13"/>
<dbReference type="EMBL" id="CR860553">
    <property type="protein sequence ID" value="CAH92678.1"/>
    <property type="molecule type" value="mRNA"/>
</dbReference>
<dbReference type="SMR" id="Q5R6D8"/>
<dbReference type="FunCoup" id="Q5R6D8">
    <property type="interactions" value="4199"/>
</dbReference>
<dbReference type="STRING" id="9601.ENSPPYP00000017658"/>
<dbReference type="InParanoid" id="Q5R6D8"/>
<dbReference type="Proteomes" id="UP000001595">
    <property type="component" value="Unplaced"/>
</dbReference>
<dbReference type="GO" id="GO:0015030">
    <property type="term" value="C:Cajal body"/>
    <property type="evidence" value="ECO:0007669"/>
    <property type="project" value="UniProtKB-SubCell"/>
</dbReference>
<dbReference type="GO" id="GO:0016607">
    <property type="term" value="C:nuclear speck"/>
    <property type="evidence" value="ECO:0007669"/>
    <property type="project" value="UniProtKB-SubCell"/>
</dbReference>
<dbReference type="GO" id="GO:0005684">
    <property type="term" value="C:U2-type spliceosomal complex"/>
    <property type="evidence" value="ECO:0000250"/>
    <property type="project" value="UniProtKB"/>
</dbReference>
<dbReference type="GO" id="GO:0005524">
    <property type="term" value="F:ATP binding"/>
    <property type="evidence" value="ECO:0007669"/>
    <property type="project" value="UniProtKB-KW"/>
</dbReference>
<dbReference type="GO" id="GO:0016887">
    <property type="term" value="F:ATP hydrolysis activity"/>
    <property type="evidence" value="ECO:0007669"/>
    <property type="project" value="RHEA"/>
</dbReference>
<dbReference type="GO" id="GO:0003723">
    <property type="term" value="F:RNA binding"/>
    <property type="evidence" value="ECO:0007669"/>
    <property type="project" value="UniProtKB-KW"/>
</dbReference>
<dbReference type="GO" id="GO:0003724">
    <property type="term" value="F:RNA helicase activity"/>
    <property type="evidence" value="ECO:0007669"/>
    <property type="project" value="UniProtKB-EC"/>
</dbReference>
<dbReference type="GO" id="GO:0000398">
    <property type="term" value="P:mRNA splicing, via spliceosome"/>
    <property type="evidence" value="ECO:0000250"/>
    <property type="project" value="UniProtKB"/>
</dbReference>
<dbReference type="GO" id="GO:1903241">
    <property type="term" value="P:U2-type prespliceosome assembly"/>
    <property type="evidence" value="ECO:0000250"/>
    <property type="project" value="UniProtKB"/>
</dbReference>
<dbReference type="CDD" id="cd17953">
    <property type="entry name" value="DEADc_DDX46"/>
    <property type="match status" value="1"/>
</dbReference>
<dbReference type="CDD" id="cd22473">
    <property type="entry name" value="KH-I_DDX46"/>
    <property type="match status" value="1"/>
</dbReference>
<dbReference type="CDD" id="cd18787">
    <property type="entry name" value="SF2_C_DEAD"/>
    <property type="match status" value="1"/>
</dbReference>
<dbReference type="FunFam" id="3.40.50.300:FF:000079">
    <property type="entry name" value="probable ATP-dependent RNA helicase DDX17"/>
    <property type="match status" value="1"/>
</dbReference>
<dbReference type="FunFam" id="3.40.50.300:FF:000584">
    <property type="entry name" value="probable ATP-dependent RNA helicase DDX46"/>
    <property type="match status" value="1"/>
</dbReference>
<dbReference type="Gene3D" id="3.40.50.300">
    <property type="entry name" value="P-loop containing nucleotide triphosphate hydrolases"/>
    <property type="match status" value="2"/>
</dbReference>
<dbReference type="InterPro" id="IPR011545">
    <property type="entry name" value="DEAD/DEAH_box_helicase_dom"/>
</dbReference>
<dbReference type="InterPro" id="IPR014001">
    <property type="entry name" value="Helicase_ATP-bd"/>
</dbReference>
<dbReference type="InterPro" id="IPR001650">
    <property type="entry name" value="Helicase_C-like"/>
</dbReference>
<dbReference type="InterPro" id="IPR027417">
    <property type="entry name" value="P-loop_NTPase"/>
</dbReference>
<dbReference type="InterPro" id="IPR056149">
    <property type="entry name" value="PRP5/DDX46/KHDC4_KH"/>
</dbReference>
<dbReference type="InterPro" id="IPR000629">
    <property type="entry name" value="RNA-helicase_DEAD-box_CS"/>
</dbReference>
<dbReference type="InterPro" id="IPR014014">
    <property type="entry name" value="RNA_helicase_DEAD_Q_motif"/>
</dbReference>
<dbReference type="PANTHER" id="PTHR47958">
    <property type="entry name" value="ATP-DEPENDENT RNA HELICASE DBP3"/>
    <property type="match status" value="1"/>
</dbReference>
<dbReference type="Pfam" id="PF00270">
    <property type="entry name" value="DEAD"/>
    <property type="match status" value="1"/>
</dbReference>
<dbReference type="Pfam" id="PF00271">
    <property type="entry name" value="Helicase_C"/>
    <property type="match status" value="1"/>
</dbReference>
<dbReference type="Pfam" id="PF23469">
    <property type="entry name" value="KH_12"/>
    <property type="match status" value="1"/>
</dbReference>
<dbReference type="SMART" id="SM00487">
    <property type="entry name" value="DEXDc"/>
    <property type="match status" value="1"/>
</dbReference>
<dbReference type="SMART" id="SM00490">
    <property type="entry name" value="HELICc"/>
    <property type="match status" value="1"/>
</dbReference>
<dbReference type="SUPFAM" id="SSF52540">
    <property type="entry name" value="P-loop containing nucleoside triphosphate hydrolases"/>
    <property type="match status" value="2"/>
</dbReference>
<dbReference type="PROSITE" id="PS00039">
    <property type="entry name" value="DEAD_ATP_HELICASE"/>
    <property type="match status" value="1"/>
</dbReference>
<dbReference type="PROSITE" id="PS51192">
    <property type="entry name" value="HELICASE_ATP_BIND_1"/>
    <property type="match status" value="1"/>
</dbReference>
<dbReference type="PROSITE" id="PS51194">
    <property type="entry name" value="HELICASE_CTER"/>
    <property type="match status" value="1"/>
</dbReference>
<dbReference type="PROSITE" id="PS51195">
    <property type="entry name" value="Q_MOTIF"/>
    <property type="match status" value="1"/>
</dbReference>
<keyword id="KW-0007">Acetylation</keyword>
<keyword id="KW-0067">ATP-binding</keyword>
<keyword id="KW-0175">Coiled coil</keyword>
<keyword id="KW-0347">Helicase</keyword>
<keyword id="KW-0378">Hydrolase</keyword>
<keyword id="KW-1017">Isopeptide bond</keyword>
<keyword id="KW-0449">Lipoprotein</keyword>
<keyword id="KW-0507">mRNA processing</keyword>
<keyword id="KW-0508">mRNA splicing</keyword>
<keyword id="KW-0519">Myristate</keyword>
<keyword id="KW-0547">Nucleotide-binding</keyword>
<keyword id="KW-0539">Nucleus</keyword>
<keyword id="KW-0597">Phosphoprotein</keyword>
<keyword id="KW-1185">Reference proteome</keyword>
<keyword id="KW-0694">RNA-binding</keyword>
<keyword id="KW-0747">Spliceosome</keyword>
<keyword id="KW-0832">Ubl conjugation</keyword>
<feature type="initiator methionine" description="Removed" evidence="3">
    <location>
        <position position="1"/>
    </location>
</feature>
<feature type="chain" id="PRO_0000055123" description="Probable ATP-dependent RNA helicase DDX46">
    <location>
        <begin position="2"/>
        <end position="1032"/>
    </location>
</feature>
<feature type="domain" description="Helicase ATP-binding" evidence="5">
    <location>
        <begin position="403"/>
        <end position="581"/>
    </location>
</feature>
<feature type="domain" description="Helicase C-terminal" evidence="6">
    <location>
        <begin position="592"/>
        <end position="753"/>
    </location>
</feature>
<feature type="region of interest" description="Disordered" evidence="7">
    <location>
        <begin position="1"/>
        <end position="228"/>
    </location>
</feature>
<feature type="coiled-coil region" evidence="4">
    <location>
        <begin position="152"/>
        <end position="197"/>
    </location>
</feature>
<feature type="short sequence motif" description="Q motif">
    <location>
        <begin position="372"/>
        <end position="400"/>
    </location>
</feature>
<feature type="short sequence motif" description="DEAD box">
    <location>
        <begin position="529"/>
        <end position="532"/>
    </location>
</feature>
<feature type="compositionally biased region" description="Basic residues" evidence="7">
    <location>
        <begin position="1"/>
        <end position="24"/>
    </location>
</feature>
<feature type="compositionally biased region" description="Basic and acidic residues" evidence="7">
    <location>
        <begin position="26"/>
        <end position="49"/>
    </location>
</feature>
<feature type="compositionally biased region" description="Basic residues" evidence="7">
    <location>
        <begin position="50"/>
        <end position="73"/>
    </location>
</feature>
<feature type="compositionally biased region" description="Basic residues" evidence="7">
    <location>
        <begin position="81"/>
        <end position="103"/>
    </location>
</feature>
<feature type="compositionally biased region" description="Basic and acidic residues" evidence="7">
    <location>
        <begin position="112"/>
        <end position="200"/>
    </location>
</feature>
<feature type="compositionally biased region" description="Acidic residues" evidence="7">
    <location>
        <begin position="201"/>
        <end position="211"/>
    </location>
</feature>
<feature type="compositionally biased region" description="Acidic residues" evidence="7">
    <location>
        <begin position="219"/>
        <end position="228"/>
    </location>
</feature>
<feature type="binding site" evidence="5">
    <location>
        <begin position="416"/>
        <end position="423"/>
    </location>
    <ligand>
        <name>ATP</name>
        <dbReference type="ChEBI" id="CHEBI:30616"/>
    </ligand>
</feature>
<feature type="modified residue" description="Phosphoserine" evidence="2">
    <location>
        <position position="199"/>
    </location>
</feature>
<feature type="modified residue" description="N6-acetyllysine" evidence="3">
    <location>
        <position position="263"/>
    </location>
</feature>
<feature type="modified residue" description="Phosphotyrosine" evidence="3">
    <location>
        <position position="294"/>
    </location>
</feature>
<feature type="modified residue" description="Phosphoserine" evidence="3">
    <location>
        <position position="295"/>
    </location>
</feature>
<feature type="modified residue" description="Phosphoserine" evidence="3">
    <location>
        <position position="296"/>
    </location>
</feature>
<feature type="modified residue" description="Phosphoserine" evidence="3">
    <location>
        <position position="346"/>
    </location>
</feature>
<feature type="modified residue" description="N6-acetyllysine" evidence="3">
    <location>
        <position position="776"/>
    </location>
</feature>
<feature type="modified residue" description="Phosphoserine" evidence="3">
    <location>
        <position position="804"/>
    </location>
</feature>
<feature type="modified residue" description="N6-acetyllysine" evidence="1">
    <location>
        <position position="904"/>
    </location>
</feature>
<feature type="modified residue" description="Phosphoserine" evidence="3">
    <location>
        <position position="929"/>
    </location>
</feature>
<feature type="lipid moiety-binding region" description="N-myristoyl glycine" evidence="3">
    <location>
        <position position="2"/>
    </location>
</feature>
<feature type="cross-link" description="Glycyl lysine isopeptide (Lys-Gly) (interchain with G-Cter in SUMO2)" evidence="3">
    <location>
        <position position="186"/>
    </location>
</feature>
<feature type="cross-link" description="Glycyl lysine isopeptide (Lys-Gly) (interchain with G-Cter in SUMO2)" evidence="3">
    <location>
        <position position="325"/>
    </location>
</feature>
<feature type="cross-link" description="Glycyl lysine isopeptide (Lys-Gly) (interchain with G-Cter in SUMO2)" evidence="3">
    <location>
        <position position="779"/>
    </location>
</feature>
<feature type="cross-link" description="Glycyl lysine isopeptide (Lys-Gly) (interchain with G-Cter in SUMO2)" evidence="3">
    <location>
        <position position="908"/>
    </location>
</feature>
<feature type="cross-link" description="Glycyl lysine isopeptide (Lys-Gly) (interchain with G-Cter in SUMO2)" evidence="3">
    <location>
        <position position="916"/>
    </location>
</feature>
<protein>
    <recommendedName>
        <fullName>Probable ATP-dependent RNA helicase DDX46</fullName>
        <ecNumber>3.6.4.13</ecNumber>
    </recommendedName>
    <alternativeName>
        <fullName>DEAD box protein 46</fullName>
    </alternativeName>
</protein>
<proteinExistence type="evidence at transcript level"/>
<evidence type="ECO:0000250" key="1">
    <source>
        <dbReference type="UniProtKB" id="Q569Z5"/>
    </source>
</evidence>
<evidence type="ECO:0000250" key="2">
    <source>
        <dbReference type="UniProtKB" id="Q62780"/>
    </source>
</evidence>
<evidence type="ECO:0000250" key="3">
    <source>
        <dbReference type="UniProtKB" id="Q7L014"/>
    </source>
</evidence>
<evidence type="ECO:0000255" key="4"/>
<evidence type="ECO:0000255" key="5">
    <source>
        <dbReference type="PROSITE-ProRule" id="PRU00541"/>
    </source>
</evidence>
<evidence type="ECO:0000255" key="6">
    <source>
        <dbReference type="PROSITE-ProRule" id="PRU00542"/>
    </source>
</evidence>
<evidence type="ECO:0000256" key="7">
    <source>
        <dbReference type="SAM" id="MobiDB-lite"/>
    </source>
</evidence>
<evidence type="ECO:0000305" key="8"/>
<reference key="1">
    <citation type="submission" date="2004-11" db="EMBL/GenBank/DDBJ databases">
        <authorList>
            <consortium name="The German cDNA consortium"/>
        </authorList>
    </citation>
    <scope>NUCLEOTIDE SEQUENCE [LARGE SCALE MRNA]</scope>
    <source>
        <tissue>Brain cortex</tissue>
    </source>
</reference>
<name>DDX46_PONAB</name>
<comment type="function">
    <text evidence="3">Component of the 17S U2 SnRNP complex of the spliceosome, a large ribonucleoprotein complex that removes introns from transcribed pre-mRNAs. The 17S U2 SnRNP complex (1) directly participates in early spliceosome assembly and (2) mediates recognition of the intron branch site during pre-mRNA splicing by promoting the selection of the pre-mRNA branch-site adenosine, the nucleophile for the first step of splicing. Within the 17S U2 SnRNP complex, DDX46 plays essential roles during assembly of pre-spliceosome and proofreading of the branch site.</text>
</comment>
<comment type="catalytic activity">
    <reaction>
        <text>ATP + H2O = ADP + phosphate + H(+)</text>
        <dbReference type="Rhea" id="RHEA:13065"/>
        <dbReference type="ChEBI" id="CHEBI:15377"/>
        <dbReference type="ChEBI" id="CHEBI:15378"/>
        <dbReference type="ChEBI" id="CHEBI:30616"/>
        <dbReference type="ChEBI" id="CHEBI:43474"/>
        <dbReference type="ChEBI" id="CHEBI:456216"/>
        <dbReference type="EC" id="3.6.4.13"/>
    </reaction>
</comment>
<comment type="subunit">
    <text evidence="3">Component of the 17S U2 SnRNP complex, a ribonucleoprotein complex that contains small nuclear RNA (snRNA) U2 and a number of specific proteins. Within the 17S U2 SnRNP complex, DDX46 is part of the SF3B subcomplex, which is required for 'A' complex assembly formed by the stable binding of U2 snRNP to the branchpoint sequence in pre-mRNA. Recruited to the 17S U2 SnRNP complex following release of DDX42; DDX42 and DDX46 bind the SF3B subcomplex in a competitive manner.</text>
</comment>
<comment type="subcellular location">
    <subcellularLocation>
        <location evidence="3">Nucleus speckle</location>
    </subcellularLocation>
    <subcellularLocation>
        <location evidence="3">Nucleus</location>
        <location evidence="3">Cajal body</location>
    </subcellularLocation>
    <text evidence="3">Present in Cajal bodies (CBs) and nuclear speckles.</text>
</comment>
<comment type="similarity">
    <text evidence="8">Belongs to the DEAD box helicase family. DDX46/PRP5 subfamily.</text>
</comment>
<gene>
    <name type="primary">DDX46</name>
</gene>
<accession>Q5R6D8</accession>
<organism>
    <name type="scientific">Pongo abelii</name>
    <name type="common">Sumatran orangutan</name>
    <name type="synonym">Pongo pygmaeus abelii</name>
    <dbReference type="NCBI Taxonomy" id="9601"/>
    <lineage>
        <taxon>Eukaryota</taxon>
        <taxon>Metazoa</taxon>
        <taxon>Chordata</taxon>
        <taxon>Craniata</taxon>
        <taxon>Vertebrata</taxon>
        <taxon>Euteleostomi</taxon>
        <taxon>Mammalia</taxon>
        <taxon>Eutheria</taxon>
        <taxon>Euarchontoglires</taxon>
        <taxon>Primates</taxon>
        <taxon>Haplorrhini</taxon>
        <taxon>Catarrhini</taxon>
        <taxon>Hominidae</taxon>
        <taxon>Pongo</taxon>
    </lineage>
</organism>
<sequence length="1032" mass="117461">MGRESRHYRKRSASRGRSGSRSRSRSPSDKRSKRGDDRRSRSRDRDRRRERSRSRDKRRSRSRDRKRLRRSRSRERDRSRERRRSRSRDRRRSRSRSRGRRSRSSSPGNKSKKTENRSRSKEKTDGGESSKEKKKDKDDKEDEKEKDAGNFDQNKLEEEMRKRKERVEKWREEQRKKAMENIGELKKEIEEMKQGKKWSLEDDDDDEDDPAEAEKEGNEMEGEELDPLDAYMEEVKEEVKKFNMRSVKGGGGNEKKSGPTVTKVVTVVTTKKAVVDSDKKKGELMENDQDAMEYSSEEEEVDLQTALTGYQTKQRKLLEPVDHGKIEYEPFRKNFYVEVPELAKMSQEEVNVFRLEMEGITVKGKGCPKPIKSWVQCGISMKILNSLKKHGYEKPTPIQTQAIPAIMSGRDLIGIAKTGSGKTIAFLLPMFRHIMDQRSLEEGEGPIAVIMTPTRELALQITKECKKFSKTLGLRVVCVYGGTGISEQIAELKRGAEIIVCTPGRMIDMLAANSGRVTNLRRVTYVVLDEADRMFDMGFEPQVMRIVDNVRPDRQTVMFSATFPRAMEALVRRILSKPIEVQVGGRSVVCSDVEQQVIVIEEEKKFLKLLELLGHYQESGSVIIFVDKQEHADGLLKDLMRASYPCMSLHGGIDQYDRDSIINDFKNGTCKLLVATSVAARGLDVKHLILVVNYSCPNHYEDYVHRAGRTGRAGNKGYAYTFITEDQARYAGDIIKALELSGTAVPPDLEKLWSDFKDQQKAEGKIIKKSSGFSGKGFKFDETEQALANERKKLQKAALGLQDSDDEDAAVDIDEQIESMFNSKKRVKDMAAPGTSSAPAPTAGNAEKLEIAKRLALRINAQKNLGIESQVDVMQQATNAILRGGTILAPTVSAKTIAEQLAEKINAKLNYVPLEKQEEERQDGGQNESFKRYEEELEINDFPQTARWKVTSKEALQRISEYSEAAITIRGTYFPPGKEPKEGERKIYLAIESANELAVQKAKAEITRLIKEELIRLQNSYQPTNKGRYKVL</sequence>